<keyword id="KW-0010">Activator</keyword>
<keyword id="KW-0238">DNA-binding</keyword>
<keyword id="KW-1185">Reference proteome</keyword>
<keyword id="KW-0678">Repressor</keyword>
<keyword id="KW-0804">Transcription</keyword>
<keyword id="KW-0805">Transcription regulation</keyword>
<organism>
    <name type="scientific">Escherichia coli (strain K12)</name>
    <dbReference type="NCBI Taxonomy" id="83333"/>
    <lineage>
        <taxon>Bacteria</taxon>
        <taxon>Pseudomonadati</taxon>
        <taxon>Pseudomonadota</taxon>
        <taxon>Gammaproteobacteria</taxon>
        <taxon>Enterobacterales</taxon>
        <taxon>Enterobacteriaceae</taxon>
        <taxon>Escherichia</taxon>
    </lineage>
</organism>
<accession>P76250</accession>
<name>DMLR_ECOLI</name>
<dbReference type="EMBL" id="U00096">
    <property type="protein sequence ID" value="AAC74869.2"/>
    <property type="molecule type" value="Genomic_DNA"/>
</dbReference>
<dbReference type="EMBL" id="AP009048">
    <property type="protein sequence ID" value="BAA15594.1"/>
    <property type="molecule type" value="Genomic_DNA"/>
</dbReference>
<dbReference type="PIR" id="G64940">
    <property type="entry name" value="G64940"/>
</dbReference>
<dbReference type="RefSeq" id="NP_416313.4">
    <property type="nucleotide sequence ID" value="NC_000913.3"/>
</dbReference>
<dbReference type="RefSeq" id="WP_001061575.1">
    <property type="nucleotide sequence ID" value="NZ_LN832404.1"/>
</dbReference>
<dbReference type="SMR" id="P76250"/>
<dbReference type="BioGRID" id="4260334">
    <property type="interactions" value="162"/>
</dbReference>
<dbReference type="FunCoup" id="P76250">
    <property type="interactions" value="65"/>
</dbReference>
<dbReference type="IntAct" id="P76250">
    <property type="interactions" value="13"/>
</dbReference>
<dbReference type="STRING" id="511145.b1799"/>
<dbReference type="jPOST" id="P76250"/>
<dbReference type="PaxDb" id="511145-b1799"/>
<dbReference type="EnsemblBacteria" id="AAC74869">
    <property type="protein sequence ID" value="AAC74869"/>
    <property type="gene ID" value="b1799"/>
</dbReference>
<dbReference type="GeneID" id="946316"/>
<dbReference type="KEGG" id="ecj:JW1788"/>
<dbReference type="KEGG" id="eco:b1799"/>
<dbReference type="KEGG" id="ecoc:C3026_10255"/>
<dbReference type="PATRIC" id="fig|1411691.4.peg.454"/>
<dbReference type="EchoBASE" id="EB3279"/>
<dbReference type="eggNOG" id="COG0583">
    <property type="taxonomic scope" value="Bacteria"/>
</dbReference>
<dbReference type="HOGENOM" id="CLU_039613_16_4_6"/>
<dbReference type="InParanoid" id="P76250"/>
<dbReference type="OMA" id="MAFTPLN"/>
<dbReference type="OrthoDB" id="8885940at2"/>
<dbReference type="PhylomeDB" id="P76250"/>
<dbReference type="BioCyc" id="EcoCyc:G6985-MONOMER"/>
<dbReference type="PRO" id="PR:P76250"/>
<dbReference type="Proteomes" id="UP000000625">
    <property type="component" value="Chromosome"/>
</dbReference>
<dbReference type="GO" id="GO:0003700">
    <property type="term" value="F:DNA-binding transcription factor activity"/>
    <property type="evidence" value="ECO:0000315"/>
    <property type="project" value="UniProtKB"/>
</dbReference>
<dbReference type="GO" id="GO:0043565">
    <property type="term" value="F:sequence-specific DNA binding"/>
    <property type="evidence" value="ECO:0000318"/>
    <property type="project" value="GO_Central"/>
</dbReference>
<dbReference type="GO" id="GO:0006351">
    <property type="term" value="P:DNA-templated transcription"/>
    <property type="evidence" value="ECO:0000318"/>
    <property type="project" value="GO_Central"/>
</dbReference>
<dbReference type="GO" id="GO:0006108">
    <property type="term" value="P:malate metabolic process"/>
    <property type="evidence" value="ECO:0000315"/>
    <property type="project" value="UniProtKB"/>
</dbReference>
<dbReference type="GO" id="GO:0045892">
    <property type="term" value="P:negative regulation of DNA-templated transcription"/>
    <property type="evidence" value="ECO:0000315"/>
    <property type="project" value="UniProtKB"/>
</dbReference>
<dbReference type="GO" id="GO:0045893">
    <property type="term" value="P:positive regulation of DNA-templated transcription"/>
    <property type="evidence" value="ECO:0000315"/>
    <property type="project" value="UniProtKB"/>
</dbReference>
<dbReference type="CDD" id="cd08479">
    <property type="entry name" value="PBP2_CrgA_like_9"/>
    <property type="match status" value="1"/>
</dbReference>
<dbReference type="FunFam" id="1.10.10.10:FF:000277">
    <property type="entry name" value="LysR family transcriptional regulator"/>
    <property type="match status" value="1"/>
</dbReference>
<dbReference type="FunFam" id="3.40.190.290:FF:000001">
    <property type="entry name" value="Transcriptional regulator, LysR family"/>
    <property type="match status" value="1"/>
</dbReference>
<dbReference type="Gene3D" id="3.40.190.290">
    <property type="match status" value="1"/>
</dbReference>
<dbReference type="Gene3D" id="1.10.10.10">
    <property type="entry name" value="Winged helix-like DNA-binding domain superfamily/Winged helix DNA-binding domain"/>
    <property type="match status" value="1"/>
</dbReference>
<dbReference type="InterPro" id="IPR005119">
    <property type="entry name" value="LysR_subst-bd"/>
</dbReference>
<dbReference type="InterPro" id="IPR000847">
    <property type="entry name" value="Tscrpt_reg_HTH_LysR"/>
</dbReference>
<dbReference type="InterPro" id="IPR036388">
    <property type="entry name" value="WH-like_DNA-bd_sf"/>
</dbReference>
<dbReference type="InterPro" id="IPR036390">
    <property type="entry name" value="WH_DNA-bd_sf"/>
</dbReference>
<dbReference type="PANTHER" id="PTHR30537:SF5">
    <property type="entry name" value="HTH-TYPE TRANSCRIPTIONAL ACTIVATOR TTDR-RELATED"/>
    <property type="match status" value="1"/>
</dbReference>
<dbReference type="PANTHER" id="PTHR30537">
    <property type="entry name" value="HTH-TYPE TRANSCRIPTIONAL REGULATOR"/>
    <property type="match status" value="1"/>
</dbReference>
<dbReference type="Pfam" id="PF00126">
    <property type="entry name" value="HTH_1"/>
    <property type="match status" value="1"/>
</dbReference>
<dbReference type="Pfam" id="PF03466">
    <property type="entry name" value="LysR_substrate"/>
    <property type="match status" value="1"/>
</dbReference>
<dbReference type="SUPFAM" id="SSF53850">
    <property type="entry name" value="Periplasmic binding protein-like II"/>
    <property type="match status" value="1"/>
</dbReference>
<dbReference type="SUPFAM" id="SSF46785">
    <property type="entry name" value="Winged helix' DNA-binding domain"/>
    <property type="match status" value="1"/>
</dbReference>
<dbReference type="PROSITE" id="PS50931">
    <property type="entry name" value="HTH_LYSR"/>
    <property type="match status" value="1"/>
</dbReference>
<sequence length="307" mass="34631">MNNLPLLNDLRVFMLVARRAGFAAVAEELGVSPAFVSKRIALLEQTLNVVLLHRTTRRVTITEEGERIYEWAQRILQDVGQMMDELSDVRQVPQGMLRIISSFGFGRQVVAPALLALAKAYPQLELRFDVEDRLVDLVNEGVDLDIRIGDDIAPNLIARKLATNYRILCASPEFIAQHGAPKHLTDLSALPCLVIKERDHPFGVWQLRNKEGPHAIKVTGPLSSNHGEIVHQWCLDGQGIALRSWWDVSENIASGHLVQVLPEYYQPANVWAVYVSRLATSAKVRITVEFLRQYFAEHYPNFSLEHA</sequence>
<comment type="function">
    <text evidence="2 3">Transcriptional regulator required for the aerobic growth on D-malate as the sole carbon source. Induces the expression of dmlA in response to D-malate or L- or meso-tartrate. Negatively regulates its own expression.</text>
</comment>
<comment type="induction">
    <text evidence="3">Expression of dmlR is subject to negative autoregulation under both aerobic and anaerobic growth conditions. Its level of expression is generally lower under anaerobic conditions than that under aerobic conditions.</text>
</comment>
<comment type="disruption phenotype">
    <text evidence="2 3">Deletion of dmlR inhibits aerobic growth on D-malate and inhibits the induction of dmlA expression by D-malate and L- and meso-tartrate.</text>
</comment>
<comment type="similarity">
    <text evidence="4">Belongs to the LysR transcriptional regulatory family.</text>
</comment>
<reference key="1">
    <citation type="journal article" date="1996" name="DNA Res.">
        <title>A 460-kb DNA sequence of the Escherichia coli K-12 genome corresponding to the 40.1-50.0 min region on the linkage map.</title>
        <authorList>
            <person name="Itoh T."/>
            <person name="Aiba H."/>
            <person name="Baba T."/>
            <person name="Fujita K."/>
            <person name="Hayashi K."/>
            <person name="Inada T."/>
            <person name="Isono K."/>
            <person name="Kasai H."/>
            <person name="Kimura S."/>
            <person name="Kitakawa M."/>
            <person name="Kitagawa M."/>
            <person name="Makino K."/>
            <person name="Miki T."/>
            <person name="Mizobuchi K."/>
            <person name="Mori H."/>
            <person name="Mori T."/>
            <person name="Motomura K."/>
            <person name="Nakade S."/>
            <person name="Nakamura Y."/>
            <person name="Nashimoto H."/>
            <person name="Nishio Y."/>
            <person name="Oshima T."/>
            <person name="Saito N."/>
            <person name="Sampei G."/>
            <person name="Seki Y."/>
            <person name="Sivasundaram S."/>
            <person name="Tagami H."/>
            <person name="Takeda J."/>
            <person name="Takemoto K."/>
            <person name="Wada C."/>
            <person name="Yamamoto Y."/>
            <person name="Horiuchi T."/>
        </authorList>
    </citation>
    <scope>NUCLEOTIDE SEQUENCE [LARGE SCALE GENOMIC DNA]</scope>
    <source>
        <strain>K12 / W3110 / ATCC 27325 / DSM 5911</strain>
    </source>
</reference>
<reference key="2">
    <citation type="journal article" date="1997" name="Science">
        <title>The complete genome sequence of Escherichia coli K-12.</title>
        <authorList>
            <person name="Blattner F.R."/>
            <person name="Plunkett G. III"/>
            <person name="Bloch C.A."/>
            <person name="Perna N.T."/>
            <person name="Burland V."/>
            <person name="Riley M."/>
            <person name="Collado-Vides J."/>
            <person name="Glasner J.D."/>
            <person name="Rode C.K."/>
            <person name="Mayhew G.F."/>
            <person name="Gregor J."/>
            <person name="Davis N.W."/>
            <person name="Kirkpatrick H.A."/>
            <person name="Goeden M.A."/>
            <person name="Rose D.J."/>
            <person name="Mau B."/>
            <person name="Shao Y."/>
        </authorList>
    </citation>
    <scope>NUCLEOTIDE SEQUENCE [LARGE SCALE GENOMIC DNA]</scope>
    <source>
        <strain>K12 / MG1655 / ATCC 47076</strain>
    </source>
</reference>
<reference key="3">
    <citation type="journal article" date="2006" name="Mol. Syst. Biol.">
        <title>Highly accurate genome sequences of Escherichia coli K-12 strains MG1655 and W3110.</title>
        <authorList>
            <person name="Hayashi K."/>
            <person name="Morooka N."/>
            <person name="Yamamoto Y."/>
            <person name="Fujita K."/>
            <person name="Isono K."/>
            <person name="Choi S."/>
            <person name="Ohtsubo E."/>
            <person name="Baba T."/>
            <person name="Wanner B.L."/>
            <person name="Mori H."/>
            <person name="Horiuchi T."/>
        </authorList>
    </citation>
    <scope>NUCLEOTIDE SEQUENCE [LARGE SCALE GENOMIC DNA]</scope>
    <source>
        <strain>K12 / W3110 / ATCC 27325 / DSM 5911</strain>
    </source>
</reference>
<reference key="4">
    <citation type="journal article" date="2006" name="Proc. Natl. Acad. Sci. U.S.A.">
        <title>Systems approach to refining genome annotation.</title>
        <authorList>
            <person name="Reed J.L."/>
            <person name="Patel T.R."/>
            <person name="Chen K.H."/>
            <person name="Joyce A.R."/>
            <person name="Applebee M.K."/>
            <person name="Herring C.D."/>
            <person name="Bui O.T."/>
            <person name="Knight E.M."/>
            <person name="Fong S.S."/>
            <person name="Palsson B.O."/>
        </authorList>
    </citation>
    <scope>DISRUPTION PHENOTYPE</scope>
    <scope>ROLE IN D-MALATE UTILIZATION</scope>
</reference>
<reference key="5">
    <citation type="journal article" date="2010" name="J. Bacteriol.">
        <title>Regulation of aerobic and anaerobic D-malate metabolism of Escherichia coli by the LysR-type regulator DmlR (YeaT).</title>
        <authorList>
            <person name="Lukas H."/>
            <person name="Reimann J."/>
            <person name="Kim O.B."/>
            <person name="Grimpo J."/>
            <person name="Unden G."/>
        </authorList>
    </citation>
    <scope>FUNCTION AS A TRANSCRIPTIONAL REGULATOR</scope>
    <scope>ROLE IN D-MALATE UTILIZATION</scope>
    <scope>INDUCTION</scope>
    <scope>DISRUPTION PHENOTYPE</scope>
    <source>
        <strain>K12 / MC4100 / ATCC 35695 / DSM 6574</strain>
    </source>
</reference>
<protein>
    <recommendedName>
        <fullName>HTH-type transcriptional regulator DmlR</fullName>
    </recommendedName>
    <alternativeName>
        <fullName>D-malate degradation protein R</fullName>
    </alternativeName>
</protein>
<gene>
    <name type="primary">dmlR</name>
    <name type="synonym">yeaT</name>
    <name type="ordered locus">b1799</name>
    <name type="ordered locus">JW1788</name>
</gene>
<proteinExistence type="evidence at protein level"/>
<feature type="chain" id="PRO_0000105786" description="HTH-type transcriptional regulator DmlR">
    <location>
        <begin position="1"/>
        <end position="307"/>
    </location>
</feature>
<feature type="domain" description="HTH lysR-type" evidence="1">
    <location>
        <begin position="5"/>
        <end position="62"/>
    </location>
</feature>
<feature type="DNA-binding region" description="H-T-H motif" evidence="1">
    <location>
        <begin position="22"/>
        <end position="41"/>
    </location>
</feature>
<evidence type="ECO:0000255" key="1">
    <source>
        <dbReference type="PROSITE-ProRule" id="PRU00253"/>
    </source>
</evidence>
<evidence type="ECO:0000269" key="2">
    <source>
    </source>
</evidence>
<evidence type="ECO:0000269" key="3">
    <source>
    </source>
</evidence>
<evidence type="ECO:0000305" key="4"/>